<comment type="function">
    <text evidence="2">RNA-binding component of the eukaryotic translation initiation factor 3 (eIF-3) complex, which is required for several steps in the initiation of protein synthesis. The eIF-3 complex associates with the 40S ribosome and facilitates the recruitment of eIF-1, eIF-1A, eIF-2:GTP:methionyl-tRNAi and eIF-5 to form the 43S pre-initiation complex (43S PIC). The eIF-3 complex stimulates mRNA recruitment to the 43S PIC and scanning of the mRNA for AUG recognition. The eIF-3 complex is also required for disassembly and recycling of post-termination ribosomal complexes and subsequently prevents premature joining of the 40S and 60S ribosomal subunits prior to initiation. The eIF-3 complex specifically targets and initiates translation of a subset of mRNAs involved in cell proliferation, including cell cycling, differentiation and apoptosis, and uses different modes of RNA stem-loop binding to exert either translational activation or repression.</text>
</comment>
<comment type="subunit">
    <text evidence="1 2">Component of the eukaryotic translation initiation factor 3 (eIF-3) complex, which is composed of 13 subunits: EIF3A, EIF3B, EIF3C, EIF3D, EIF3E, EIF3F, EIF3G, EIF3H, EIF3I, EIF3J, EIF3K, EIF3L and EIF3M. The eIF-3 complex appears to include 3 stable modules: module A is composed of EIF3A, EIF3B, EIF3G and EIF3I; module B is composed of EIF3F, EIF3H, and EIF3M; and module C is composed of EIF3C, EIF3D, EIF3E, EIF3K and EIF3L. EIF3C of module C binds EIF3B of module A and EIF3H of module B, thereby linking the three modules. EIF3J is a labile subunit that binds to the eIF-3 complex via EIF3B. The eIF-3 complex interacts with RPS6KB1 under conditions of nutrient depletion. Mitogenic stimulation leads to binding and activation of a complex composed of MTOR and RPTOR, leading to phosphorylation and release of RPS6KB1 and binding of EIF4B to eIF-3. Also interacts with UPF2 and HNRPD. Interacts with METTL3. Interacts with DDX3X (By similarity).</text>
</comment>
<comment type="subcellular location">
    <subcellularLocation>
        <location evidence="2">Cytoplasm</location>
    </subcellularLocation>
    <subcellularLocation>
        <location evidence="1">Cytoplasm</location>
        <location evidence="1">Stress granule</location>
    </subcellularLocation>
    <text evidence="1">Localizes to stress granules following cellular stress.</text>
</comment>
<comment type="domain">
    <text evidence="2">The RRM domain mediates interaction with EIF3J.</text>
</comment>
<comment type="PTM">
    <text evidence="2">Phosphorylated. Phosphorylation is enhanced upon serum stimulation.</text>
</comment>
<comment type="similarity">
    <text evidence="2">Belongs to the eIF-3 subunit B family.</text>
</comment>
<accession>A7MB16</accession>
<dbReference type="EMBL" id="BC151284">
    <property type="protein sequence ID" value="AAI51285.1"/>
    <property type="molecule type" value="mRNA"/>
</dbReference>
<dbReference type="RefSeq" id="NP_001095826.1">
    <property type="nucleotide sequence ID" value="NM_001102356.1"/>
</dbReference>
<dbReference type="SMR" id="A7MB16"/>
<dbReference type="FunCoup" id="A7MB16">
    <property type="interactions" value="5098"/>
</dbReference>
<dbReference type="STRING" id="9913.ENSBTAP00000009832"/>
<dbReference type="PaxDb" id="9913-ENSBTAP00000009832"/>
<dbReference type="PeptideAtlas" id="A7MB16"/>
<dbReference type="Ensembl" id="ENSBTAT00000009832.6">
    <property type="protein sequence ID" value="ENSBTAP00000009832.5"/>
    <property type="gene ID" value="ENSBTAG00000007474.7"/>
</dbReference>
<dbReference type="GeneID" id="789999"/>
<dbReference type="KEGG" id="bta:789999"/>
<dbReference type="CTD" id="8662"/>
<dbReference type="VEuPathDB" id="HostDB:ENSBTAG00000007474"/>
<dbReference type="VGNC" id="VGNC:28393">
    <property type="gene designation" value="EIF3B"/>
</dbReference>
<dbReference type="eggNOG" id="KOG2314">
    <property type="taxonomic scope" value="Eukaryota"/>
</dbReference>
<dbReference type="GeneTree" id="ENSGT00550000074913"/>
<dbReference type="HOGENOM" id="CLU_011152_1_0_1"/>
<dbReference type="InParanoid" id="A7MB16"/>
<dbReference type="OMA" id="LWGGPQF"/>
<dbReference type="OrthoDB" id="10250414at2759"/>
<dbReference type="TreeFam" id="TF101521"/>
<dbReference type="Reactome" id="R-BTA-156827">
    <property type="pathway name" value="L13a-mediated translational silencing of Ceruloplasmin expression"/>
</dbReference>
<dbReference type="Reactome" id="R-BTA-72649">
    <property type="pathway name" value="Translation initiation complex formation"/>
</dbReference>
<dbReference type="Reactome" id="R-BTA-72689">
    <property type="pathway name" value="Formation of a pool of free 40S subunits"/>
</dbReference>
<dbReference type="Reactome" id="R-BTA-72695">
    <property type="pathway name" value="Formation of the ternary complex, and subsequently, the 43S complex"/>
</dbReference>
<dbReference type="Reactome" id="R-BTA-72702">
    <property type="pathway name" value="Ribosomal scanning and start codon recognition"/>
</dbReference>
<dbReference type="Proteomes" id="UP000009136">
    <property type="component" value="Chromosome 25"/>
</dbReference>
<dbReference type="Bgee" id="ENSBTAG00000007474">
    <property type="expression patterns" value="Expressed in choroid plexus and 104 other cell types or tissues"/>
</dbReference>
<dbReference type="GO" id="GO:0010494">
    <property type="term" value="C:cytoplasmic stress granule"/>
    <property type="evidence" value="ECO:0000250"/>
    <property type="project" value="UniProtKB"/>
</dbReference>
<dbReference type="GO" id="GO:0016282">
    <property type="term" value="C:eukaryotic 43S preinitiation complex"/>
    <property type="evidence" value="ECO:0007669"/>
    <property type="project" value="UniProtKB-UniRule"/>
</dbReference>
<dbReference type="GO" id="GO:0033290">
    <property type="term" value="C:eukaryotic 48S preinitiation complex"/>
    <property type="evidence" value="ECO:0007669"/>
    <property type="project" value="UniProtKB-UniRule"/>
</dbReference>
<dbReference type="GO" id="GO:0005852">
    <property type="term" value="C:eukaryotic translation initiation factor 3 complex"/>
    <property type="evidence" value="ECO:0000250"/>
    <property type="project" value="UniProtKB"/>
</dbReference>
<dbReference type="GO" id="GO:0071541">
    <property type="term" value="C:eukaryotic translation initiation factor 3 complex, eIF3m"/>
    <property type="evidence" value="ECO:0007669"/>
    <property type="project" value="Ensembl"/>
</dbReference>
<dbReference type="GO" id="GO:0045202">
    <property type="term" value="C:synapse"/>
    <property type="evidence" value="ECO:0007669"/>
    <property type="project" value="Ensembl"/>
</dbReference>
<dbReference type="GO" id="GO:0003723">
    <property type="term" value="F:RNA binding"/>
    <property type="evidence" value="ECO:0007669"/>
    <property type="project" value="UniProtKB-UniRule"/>
</dbReference>
<dbReference type="GO" id="GO:0003743">
    <property type="term" value="F:translation initiation factor activity"/>
    <property type="evidence" value="ECO:0007669"/>
    <property type="project" value="UniProtKB-UniRule"/>
</dbReference>
<dbReference type="GO" id="GO:0031369">
    <property type="term" value="F:translation initiation factor binding"/>
    <property type="evidence" value="ECO:0007669"/>
    <property type="project" value="InterPro"/>
</dbReference>
<dbReference type="GO" id="GO:0001732">
    <property type="term" value="P:formation of cytoplasmic translation initiation complex"/>
    <property type="evidence" value="ECO:0007669"/>
    <property type="project" value="UniProtKB-UniRule"/>
</dbReference>
<dbReference type="GO" id="GO:0075522">
    <property type="term" value="P:IRES-dependent viral translational initiation"/>
    <property type="evidence" value="ECO:0007669"/>
    <property type="project" value="Ensembl"/>
</dbReference>
<dbReference type="GO" id="GO:0006446">
    <property type="term" value="P:regulation of translational initiation"/>
    <property type="evidence" value="ECO:0000250"/>
    <property type="project" value="UniProtKB"/>
</dbReference>
<dbReference type="GO" id="GO:0006413">
    <property type="term" value="P:translational initiation"/>
    <property type="evidence" value="ECO:0000250"/>
    <property type="project" value="UniProtKB"/>
</dbReference>
<dbReference type="GO" id="GO:0075525">
    <property type="term" value="P:viral translational termination-reinitiation"/>
    <property type="evidence" value="ECO:0007669"/>
    <property type="project" value="Ensembl"/>
</dbReference>
<dbReference type="CDD" id="cd12278">
    <property type="entry name" value="RRM_eIF3B"/>
    <property type="match status" value="1"/>
</dbReference>
<dbReference type="FunFam" id="2.130.10.10:FF:000489">
    <property type="entry name" value="Eukaryotic translation initiation factor 3 subunit B"/>
    <property type="match status" value="1"/>
</dbReference>
<dbReference type="FunFam" id="2.130.10.10:FF:001855">
    <property type="entry name" value="Eukaryotic translation initiation factor 3 subunit B"/>
    <property type="match status" value="1"/>
</dbReference>
<dbReference type="FunFam" id="3.30.70.330:FF:000164">
    <property type="entry name" value="Eukaryotic translation initiation factor 3 subunit B"/>
    <property type="match status" value="1"/>
</dbReference>
<dbReference type="Gene3D" id="3.30.70.330">
    <property type="match status" value="1"/>
</dbReference>
<dbReference type="Gene3D" id="2.130.10.10">
    <property type="entry name" value="YVTN repeat-like/Quinoprotein amine dehydrogenase"/>
    <property type="match status" value="2"/>
</dbReference>
<dbReference type="HAMAP" id="MF_03001">
    <property type="entry name" value="eIF3b"/>
    <property type="match status" value="1"/>
</dbReference>
<dbReference type="InterPro" id="IPR011400">
    <property type="entry name" value="EIF3B"/>
</dbReference>
<dbReference type="InterPro" id="IPR034363">
    <property type="entry name" value="eIF3B_RRM"/>
</dbReference>
<dbReference type="InterPro" id="IPR012677">
    <property type="entry name" value="Nucleotide-bd_a/b_plait_sf"/>
</dbReference>
<dbReference type="InterPro" id="IPR035979">
    <property type="entry name" value="RBD_domain_sf"/>
</dbReference>
<dbReference type="InterPro" id="IPR000504">
    <property type="entry name" value="RRM_dom"/>
</dbReference>
<dbReference type="InterPro" id="IPR013979">
    <property type="entry name" value="TIF_beta_prop-like"/>
</dbReference>
<dbReference type="InterPro" id="IPR015943">
    <property type="entry name" value="WD40/YVTN_repeat-like_dom_sf"/>
</dbReference>
<dbReference type="PANTHER" id="PTHR14068">
    <property type="entry name" value="EUKARYOTIC TRANSLATION INITIATION FACTOR 3 EIF3 -RELATED"/>
    <property type="match status" value="1"/>
</dbReference>
<dbReference type="PANTHER" id="PTHR14068:SF0">
    <property type="entry name" value="EUKARYOTIC TRANSLATION INITIATION FACTOR 3 SUBUNIT B"/>
    <property type="match status" value="1"/>
</dbReference>
<dbReference type="Pfam" id="PF08662">
    <property type="entry name" value="eIF2A"/>
    <property type="match status" value="1"/>
</dbReference>
<dbReference type="Pfam" id="PF00076">
    <property type="entry name" value="RRM_1"/>
    <property type="match status" value="1"/>
</dbReference>
<dbReference type="PIRSF" id="PIRSF036424">
    <property type="entry name" value="eIF3b"/>
    <property type="match status" value="1"/>
</dbReference>
<dbReference type="SMART" id="SM00360">
    <property type="entry name" value="RRM"/>
    <property type="match status" value="1"/>
</dbReference>
<dbReference type="SUPFAM" id="SSF54928">
    <property type="entry name" value="RNA-binding domain, RBD"/>
    <property type="match status" value="1"/>
</dbReference>
<dbReference type="SUPFAM" id="SSF69322">
    <property type="entry name" value="Tricorn protease domain 2"/>
    <property type="match status" value="1"/>
</dbReference>
<dbReference type="PROSITE" id="PS50102">
    <property type="entry name" value="RRM"/>
    <property type="match status" value="1"/>
</dbReference>
<reference key="1">
    <citation type="submission" date="2007-07" db="EMBL/GenBank/DDBJ databases">
        <authorList>
            <consortium name="NIH - Mammalian Gene Collection (MGC) project"/>
        </authorList>
    </citation>
    <scope>NUCLEOTIDE SEQUENCE [LARGE SCALE MRNA]</scope>
    <source>
        <strain>Hereford</strain>
        <tissue>Fetal skin</tissue>
    </source>
</reference>
<evidence type="ECO:0000250" key="1">
    <source>
        <dbReference type="UniProtKB" id="P55884"/>
    </source>
</evidence>
<evidence type="ECO:0000255" key="2">
    <source>
        <dbReference type="HAMAP-Rule" id="MF_03001"/>
    </source>
</evidence>
<evidence type="ECO:0000256" key="3">
    <source>
        <dbReference type="SAM" id="MobiDB-lite"/>
    </source>
</evidence>
<feature type="chain" id="PRO_0000363786" description="Eukaryotic translation initiation factor 3 subunit B">
    <location>
        <begin position="1"/>
        <end position="786"/>
    </location>
</feature>
<feature type="domain" description="RRM" evidence="2">
    <location>
        <begin position="157"/>
        <end position="240"/>
    </location>
</feature>
<feature type="repeat" description="WD 1">
    <location>
        <begin position="304"/>
        <end position="342"/>
    </location>
</feature>
<feature type="repeat" description="WD 2">
    <location>
        <begin position="344"/>
        <end position="389"/>
    </location>
</feature>
<feature type="repeat" description="WD 3">
    <location>
        <begin position="393"/>
        <end position="431"/>
    </location>
</feature>
<feature type="repeat" description="WD 4">
    <location>
        <begin position="532"/>
        <end position="573"/>
    </location>
</feature>
<feature type="repeat" description="WD 5">
    <location>
        <begin position="621"/>
        <end position="666"/>
    </location>
</feature>
<feature type="region of interest" description="Disordered" evidence="3">
    <location>
        <begin position="1"/>
        <end position="130"/>
    </location>
</feature>
<feature type="region of interest" description="Sufficient for interaction with EIF3E" evidence="2">
    <location>
        <begin position="96"/>
        <end position="385"/>
    </location>
</feature>
<feature type="region of interest" description="Sufficient for interaction with EIF3J" evidence="2">
    <location>
        <begin position="142"/>
        <end position="246"/>
    </location>
</feature>
<feature type="compositionally biased region" description="Low complexity" evidence="3">
    <location>
        <begin position="20"/>
        <end position="33"/>
    </location>
</feature>
<feature type="compositionally biased region" description="Low complexity" evidence="3">
    <location>
        <begin position="50"/>
        <end position="73"/>
    </location>
</feature>
<feature type="compositionally biased region" description="Low complexity" evidence="3">
    <location>
        <begin position="81"/>
        <end position="104"/>
    </location>
</feature>
<feature type="modified residue" description="N-acetylmethionine" evidence="1 2">
    <location>
        <position position="1"/>
    </location>
</feature>
<feature type="modified residue" description="Phosphoserine" evidence="1 2">
    <location>
        <position position="104"/>
    </location>
</feature>
<feature type="modified residue" description="Phosphoserine" evidence="1 2">
    <location>
        <position position="124"/>
    </location>
</feature>
<feature type="modified residue" description="Phosphoserine" evidence="1 2">
    <location>
        <position position="126"/>
    </location>
</feature>
<feature type="modified residue" description="Phosphoserine" evidence="1 2">
    <location>
        <position position="136"/>
    </location>
</feature>
<feature type="modified residue" description="N6-acetyllysine" evidence="1">
    <location>
        <position position="181"/>
    </location>
</feature>
<feature type="modified residue" description="Phosphoserine" evidence="1 2">
    <location>
        <position position="211"/>
    </location>
</feature>
<feature type="modified residue" description="N6-acetyllysine" evidence="1">
    <location>
        <position position="260"/>
    </location>
</feature>
<feature type="modified residue" description="N6-acetyllysine" evidence="1">
    <location>
        <position position="336"/>
    </location>
</feature>
<organism>
    <name type="scientific">Bos taurus</name>
    <name type="common">Bovine</name>
    <dbReference type="NCBI Taxonomy" id="9913"/>
    <lineage>
        <taxon>Eukaryota</taxon>
        <taxon>Metazoa</taxon>
        <taxon>Chordata</taxon>
        <taxon>Craniata</taxon>
        <taxon>Vertebrata</taxon>
        <taxon>Euteleostomi</taxon>
        <taxon>Mammalia</taxon>
        <taxon>Eutheria</taxon>
        <taxon>Laurasiatheria</taxon>
        <taxon>Artiodactyla</taxon>
        <taxon>Ruminantia</taxon>
        <taxon>Pecora</taxon>
        <taxon>Bovidae</taxon>
        <taxon>Bovinae</taxon>
        <taxon>Bos</taxon>
    </lineage>
</organism>
<keyword id="KW-0007">Acetylation</keyword>
<keyword id="KW-0963">Cytoplasm</keyword>
<keyword id="KW-0396">Initiation factor</keyword>
<keyword id="KW-0597">Phosphoprotein</keyword>
<keyword id="KW-0648">Protein biosynthesis</keyword>
<keyword id="KW-1185">Reference proteome</keyword>
<keyword id="KW-0677">Repeat</keyword>
<keyword id="KW-0694">RNA-binding</keyword>
<keyword id="KW-0853">WD repeat</keyword>
<name>EIF3B_BOVIN</name>
<protein>
    <recommendedName>
        <fullName evidence="2">Eukaryotic translation initiation factor 3 subunit B</fullName>
        <shortName evidence="2">eIF3b</shortName>
    </recommendedName>
    <alternativeName>
        <fullName evidence="2">Eukaryotic translation initiation factor 3 subunit 9</fullName>
    </alternativeName>
    <alternativeName>
        <fullName evidence="2">eIF-3-eta</fullName>
    </alternativeName>
</protein>
<gene>
    <name evidence="2" type="primary">EIF3B</name>
    <name evidence="2" type="synonym">EIF3S9</name>
</gene>
<sequence>MQDAENVAAPEAAEQRAEPGPEQAAAEPSPGAEVARPGVQEAAGGEDAEAGPGPEGPAEPAADGEGKADATPGATPPPPEESSAQLAGEAPAEQAQDAAAEAGSEGAGGDPDGAAEDGGADEPSFSDPEDFVDDVSEEELLADVLKDRPQEADGIDSVIVVDNVPQVGPDRLEKLKNVIHKIFSKFGKITNDFYPEEDGRTKGYIFLEYASPAHALDAVKNADGYKLDKQHTFRVNLFTDFDKYMTISDEWDIPEKQPFKDLGNLRYWLEEAECRDQYSVIFESGDRTSIFWNDVKDPVSIEERARWTETYVRWSPKGTYLATFHQRGIALWGGEKFKQIQRFSHQGVQLIDFSPCERYLVTFSPLMDTQDDPQAIIIWDILTGQKKRGFHCESSAHWPIFKWSHDGKFFARMTLDTLSIYETPSMGLLDKKSLKISGIKDFSWSPGGNIIAFWVPEDKDIPARVTLMQLPTRQEIRVRNLFNVVDCKLHWQKNGDYLCVKVDRTPKGTQGVVTNFEIFRMREKQVPVDVVEMKETIIAFAWEPNGSKFAVLHGEAPRISVSFYHVKNNGKIELIKMFDKQQANTIFWSPQGQFVVLAGLRSMNGALAFVDTSDCTVMNIAEHYMASDVEWDPTGRYVVTSVSWWSHKVDNAYWLWTFQGRLLQKNSKDRFCQLLWRPRPPTLLSQDQIKQIKKDLKKYSKIFEQKDRLSQSKASKELVERRRTMMEDFRKYRKMAQELYMEQKNARLELRGGVDTDELDSNVDDWEEETIEFFVTEEIIPLGNQE</sequence>
<proteinExistence type="evidence at transcript level"/>